<evidence type="ECO:0000255" key="1">
    <source>
        <dbReference type="PROSITE-ProRule" id="PRU00253"/>
    </source>
</evidence>
<evidence type="ECO:0000269" key="2">
    <source>
    </source>
</evidence>
<evidence type="ECO:0000305" key="3"/>
<evidence type="ECO:0007829" key="4">
    <source>
        <dbReference type="PDB" id="4RPO"/>
    </source>
</evidence>
<dbReference type="EMBL" id="U12290">
    <property type="protein sequence ID" value="AAA68939.2"/>
    <property type="molecule type" value="Genomic_DNA"/>
</dbReference>
<dbReference type="PDB" id="4RNS">
    <property type="method" value="X-ray"/>
    <property type="resolution" value="2.70 A"/>
    <property type="chains" value="A/B/C/D=85-307"/>
</dbReference>
<dbReference type="PDB" id="4RPN">
    <property type="method" value="X-ray"/>
    <property type="resolution" value="2.27 A"/>
    <property type="chains" value="A/B/C/D=85-307"/>
</dbReference>
<dbReference type="PDB" id="4RPO">
    <property type="method" value="X-ray"/>
    <property type="resolution" value="1.95 A"/>
    <property type="chains" value="A/B/C/D=85-307"/>
</dbReference>
<dbReference type="PDBsum" id="4RNS"/>
<dbReference type="PDBsum" id="4RPN"/>
<dbReference type="PDBsum" id="4RPO"/>
<dbReference type="SMR" id="P52679"/>
<dbReference type="eggNOG" id="COG0583">
    <property type="taxonomic scope" value="Bacteria"/>
</dbReference>
<dbReference type="EvolutionaryTrace" id="P52679"/>
<dbReference type="GO" id="GO:0003677">
    <property type="term" value="F:DNA binding"/>
    <property type="evidence" value="ECO:0007669"/>
    <property type="project" value="UniProtKB-KW"/>
</dbReference>
<dbReference type="GO" id="GO:0003700">
    <property type="term" value="F:DNA-binding transcription factor activity"/>
    <property type="evidence" value="ECO:0007669"/>
    <property type="project" value="InterPro"/>
</dbReference>
<dbReference type="GO" id="GO:0009056">
    <property type="term" value="P:catabolic process"/>
    <property type="evidence" value="ECO:0007669"/>
    <property type="project" value="UniProtKB-KW"/>
</dbReference>
<dbReference type="CDD" id="cd08459">
    <property type="entry name" value="PBP2_DntR_NahR_LinR_like"/>
    <property type="match status" value="1"/>
</dbReference>
<dbReference type="Gene3D" id="3.40.190.10">
    <property type="entry name" value="Periplasmic binding protein-like II"/>
    <property type="match status" value="2"/>
</dbReference>
<dbReference type="Gene3D" id="1.10.10.10">
    <property type="entry name" value="Winged helix-like DNA-binding domain superfamily/Winged helix DNA-binding domain"/>
    <property type="match status" value="1"/>
</dbReference>
<dbReference type="InterPro" id="IPR050389">
    <property type="entry name" value="LysR-type_TF"/>
</dbReference>
<dbReference type="InterPro" id="IPR005119">
    <property type="entry name" value="LysR_subst-bd"/>
</dbReference>
<dbReference type="InterPro" id="IPR000847">
    <property type="entry name" value="Tscrpt_reg_HTH_LysR"/>
</dbReference>
<dbReference type="InterPro" id="IPR036388">
    <property type="entry name" value="WH-like_DNA-bd_sf"/>
</dbReference>
<dbReference type="InterPro" id="IPR036390">
    <property type="entry name" value="WH_DNA-bd_sf"/>
</dbReference>
<dbReference type="PANTHER" id="PTHR30118">
    <property type="entry name" value="HTH-TYPE TRANSCRIPTIONAL REGULATOR LEUO-RELATED"/>
    <property type="match status" value="1"/>
</dbReference>
<dbReference type="PANTHER" id="PTHR30118:SF15">
    <property type="entry name" value="TRANSCRIPTIONAL REGULATORY PROTEIN"/>
    <property type="match status" value="1"/>
</dbReference>
<dbReference type="Pfam" id="PF00126">
    <property type="entry name" value="HTH_1"/>
    <property type="match status" value="1"/>
</dbReference>
<dbReference type="Pfam" id="PF03466">
    <property type="entry name" value="LysR_substrate"/>
    <property type="match status" value="1"/>
</dbReference>
<dbReference type="SUPFAM" id="SSF53850">
    <property type="entry name" value="Periplasmic binding protein-like II"/>
    <property type="match status" value="1"/>
</dbReference>
<dbReference type="SUPFAM" id="SSF46785">
    <property type="entry name" value="Winged helix' DNA-binding domain"/>
    <property type="match status" value="1"/>
</dbReference>
<dbReference type="PROSITE" id="PS50931">
    <property type="entry name" value="HTH_LYSR"/>
    <property type="match status" value="1"/>
</dbReference>
<feature type="chain" id="PRO_0000105741" description="PCP degradation transcriptional activation protein">
    <location>
        <begin position="1"/>
        <end position="307"/>
    </location>
</feature>
<feature type="domain" description="HTH lysR-type" evidence="1">
    <location>
        <begin position="6"/>
        <end position="63"/>
    </location>
</feature>
<feature type="DNA-binding region" description="H-T-H motif" evidence="1">
    <location>
        <begin position="23"/>
        <end position="42"/>
    </location>
</feature>
<feature type="turn" evidence="4">
    <location>
        <begin position="92"/>
        <end position="94"/>
    </location>
</feature>
<feature type="strand" evidence="4">
    <location>
        <begin position="98"/>
        <end position="102"/>
    </location>
</feature>
<feature type="helix" evidence="4">
    <location>
        <begin position="105"/>
        <end position="111"/>
    </location>
</feature>
<feature type="helix" evidence="4">
    <location>
        <begin position="112"/>
        <end position="114"/>
    </location>
</feature>
<feature type="helix" evidence="4">
    <location>
        <begin position="116"/>
        <end position="122"/>
    </location>
</feature>
<feature type="strand" evidence="4">
    <location>
        <begin position="127"/>
        <end position="131"/>
    </location>
</feature>
<feature type="helix" evidence="4">
    <location>
        <begin position="138"/>
        <end position="143"/>
    </location>
</feature>
<feature type="strand" evidence="4">
    <location>
        <begin position="148"/>
        <end position="152"/>
    </location>
</feature>
<feature type="strand" evidence="4">
    <location>
        <begin position="161"/>
        <end position="169"/>
    </location>
</feature>
<feature type="strand" evidence="4">
    <location>
        <begin position="171"/>
        <end position="176"/>
    </location>
</feature>
<feature type="helix" evidence="4">
    <location>
        <begin position="181"/>
        <end position="184"/>
    </location>
</feature>
<feature type="helix" evidence="4">
    <location>
        <begin position="188"/>
        <end position="193"/>
    </location>
</feature>
<feature type="strand" evidence="4">
    <location>
        <begin position="194"/>
        <end position="199"/>
    </location>
</feature>
<feature type="helix" evidence="4">
    <location>
        <begin position="202"/>
        <end position="204"/>
    </location>
</feature>
<feature type="helix" evidence="4">
    <location>
        <begin position="208"/>
        <end position="218"/>
    </location>
</feature>
<feature type="helix" evidence="4">
    <location>
        <begin position="221"/>
        <end position="223"/>
    </location>
</feature>
<feature type="strand" evidence="4">
    <location>
        <begin position="224"/>
        <end position="229"/>
    </location>
</feature>
<feature type="helix" evidence="4">
    <location>
        <begin position="231"/>
        <end position="240"/>
    </location>
</feature>
<feature type="strand" evidence="4">
    <location>
        <begin position="241"/>
        <end position="248"/>
    </location>
</feature>
<feature type="helix" evidence="4">
    <location>
        <begin position="249"/>
        <end position="256"/>
    </location>
</feature>
<feature type="strand" evidence="4">
    <location>
        <begin position="257"/>
        <end position="259"/>
    </location>
</feature>
<feature type="strand" evidence="4">
    <location>
        <begin position="261"/>
        <end position="264"/>
    </location>
</feature>
<feature type="strand" evidence="4">
    <location>
        <begin position="273"/>
        <end position="280"/>
    </location>
</feature>
<feature type="helix" evidence="4">
    <location>
        <begin position="281"/>
        <end position="283"/>
    </location>
</feature>
<feature type="helix" evidence="4">
    <location>
        <begin position="287"/>
        <end position="297"/>
    </location>
</feature>
<keyword id="KW-0002">3D-structure</keyword>
<keyword id="KW-0010">Activator</keyword>
<keyword id="KW-0058">Aromatic hydrocarbons catabolism</keyword>
<keyword id="KW-0238">DNA-binding</keyword>
<keyword id="KW-0804">Transcription</keyword>
<keyword id="KW-0805">Transcription regulation</keyword>
<accession>P52679</accession>
<sequence length="307" mass="34664">MNDSVLPLGHLMVFDALYRHGSAGKAAHALSMPQPTLSRWLAQLRTHFDDPLFVRTRSGMEPTPLAARAAPHIAEMIAIYRQHVRSELRFDPGTSNRNFRIAASDFGQALMLPRLYATLEETAPQVRVTGVNLRHGPLVEELESGSIDIAFGGFPTLSAGIKTQTLFREEYVCVMRQSHPALTHGLDLEAFRQCRHIIVTAHEFNHVHEQVEARLLELLPPESIRFTTENFLVSAVIAEETDVILTIPSRLARWFANRGGLTIFPVPIELPSIEVKQYWHERYDKDPGNIWLRRVIAKIGFQNPPAE</sequence>
<comment type="function">
    <text evidence="2">Transcriptional activator for the pcpA, pcpB and pcpE genes for pentachlorophenol (PCP) degradation. Essential for PCP degradation.</text>
</comment>
<comment type="similarity">
    <text evidence="3">Belongs to the LysR transcriptional regulatory family.</text>
</comment>
<organism>
    <name type="scientific">Sphingobium chlorophenolicum</name>
    <dbReference type="NCBI Taxonomy" id="46429"/>
    <lineage>
        <taxon>Bacteria</taxon>
        <taxon>Pseudomonadati</taxon>
        <taxon>Pseudomonadota</taxon>
        <taxon>Alphaproteobacteria</taxon>
        <taxon>Sphingomonadales</taxon>
        <taxon>Sphingomonadaceae</taxon>
        <taxon>Sphingobium</taxon>
    </lineage>
</organism>
<protein>
    <recommendedName>
        <fullName>PCP degradation transcriptional activation protein</fullName>
    </recommendedName>
</protein>
<proteinExistence type="evidence at protein level"/>
<name>PCPR_SPHCR</name>
<gene>
    <name type="primary">pcpR</name>
</gene>
<reference key="1">
    <citation type="thesis" date="1994" institute="University of Idaho" country="United States">
        <title>Molecular analysis of pentachlorophenol degradation by Flavobacterium sp. strain ATCC 39723.</title>
        <authorList>
            <person name="Lange C.C."/>
        </authorList>
    </citation>
    <scope>NUCLEOTIDE SEQUENCE [GENOMIC DNA]</scope>
    <source>
        <strain>ATCC 39723 / DSM 6824 / L-1</strain>
    </source>
</reference>
<reference key="2">
    <citation type="journal article" date="2002" name="J. Bacteriol.">
        <title>Organization and regulation of pentachlorophenol-degrading genes in Sphingobium chlorophenolicum ATCC 39723.</title>
        <authorList>
            <person name="Cai M."/>
            <person name="Xun L."/>
        </authorList>
    </citation>
    <scope>SEQUENCE REVISION</scope>
    <scope>FUNCTION</scope>
    <source>
        <strain>ATCC 39723 / DSM 6824 / L-1</strain>
    </source>
</reference>